<proteinExistence type="inferred from homology"/>
<gene>
    <name evidence="1" type="primary">metN1</name>
    <name type="ordered locus">RPA1426</name>
</gene>
<sequence length="373" mass="40036">MNEPIMNAPWQPPAGELPAFVSSQPTIGILIDRVRKVYPARKSSAEVVALDDISLTVPKGSILGVIGRSGAGKSTLIRLINGLDKPSSGRVIVNGVEITALSERDLRTARRSIGMVFQHFNLLSSRTAFGNVALPLEIAGTPKAEIEKRVLPLLDMVGLADKRDRYPAELSGGQKQRVGIARALATEPSVLLSDEATSALDPETTDQILELLKQINRDLHLTILFITHEMAVVKALADRVAVIEGGRIVEDGATFDVFATPRHEVTRRFVSSVTGSGAPDWLLEKLQPQQPPGGQAVLRITFKGSDANQPLLSRVSRDLGVNLNILSGQVEMIAGHPFGTLIVSLDAAPEVLRQVIAQLSAGNNLVEQLGYVA</sequence>
<comment type="function">
    <text evidence="1">Part of the ABC transporter complex MetNIQ involved in methionine import. Responsible for energy coupling to the transport system.</text>
</comment>
<comment type="catalytic activity">
    <reaction evidence="1">
        <text>L-methionine(out) + ATP + H2O = L-methionine(in) + ADP + phosphate + H(+)</text>
        <dbReference type="Rhea" id="RHEA:29779"/>
        <dbReference type="ChEBI" id="CHEBI:15377"/>
        <dbReference type="ChEBI" id="CHEBI:15378"/>
        <dbReference type="ChEBI" id="CHEBI:30616"/>
        <dbReference type="ChEBI" id="CHEBI:43474"/>
        <dbReference type="ChEBI" id="CHEBI:57844"/>
        <dbReference type="ChEBI" id="CHEBI:456216"/>
        <dbReference type="EC" id="7.4.2.11"/>
    </reaction>
</comment>
<comment type="catalytic activity">
    <reaction evidence="1">
        <text>D-methionine(out) + ATP + H2O = D-methionine(in) + ADP + phosphate + H(+)</text>
        <dbReference type="Rhea" id="RHEA:29767"/>
        <dbReference type="ChEBI" id="CHEBI:15377"/>
        <dbReference type="ChEBI" id="CHEBI:15378"/>
        <dbReference type="ChEBI" id="CHEBI:30616"/>
        <dbReference type="ChEBI" id="CHEBI:43474"/>
        <dbReference type="ChEBI" id="CHEBI:57932"/>
        <dbReference type="ChEBI" id="CHEBI:456216"/>
        <dbReference type="EC" id="7.4.2.11"/>
    </reaction>
</comment>
<comment type="subunit">
    <text evidence="1">The complex is composed of two ATP-binding proteins (MetN), two transmembrane proteins (MetI) and a solute-binding protein (MetQ).</text>
</comment>
<comment type="subcellular location">
    <subcellularLocation>
        <location evidence="1">Cell inner membrane</location>
        <topology evidence="1">Peripheral membrane protein</topology>
    </subcellularLocation>
</comment>
<comment type="similarity">
    <text evidence="1">Belongs to the ABC transporter superfamily. Methionine importer (TC 3.A.1.24) family.</text>
</comment>
<evidence type="ECO:0000255" key="1">
    <source>
        <dbReference type="HAMAP-Rule" id="MF_01719"/>
    </source>
</evidence>
<keyword id="KW-0029">Amino-acid transport</keyword>
<keyword id="KW-0067">ATP-binding</keyword>
<keyword id="KW-0997">Cell inner membrane</keyword>
<keyword id="KW-1003">Cell membrane</keyword>
<keyword id="KW-0472">Membrane</keyword>
<keyword id="KW-0547">Nucleotide-binding</keyword>
<keyword id="KW-1278">Translocase</keyword>
<keyword id="KW-0813">Transport</keyword>
<reference key="1">
    <citation type="journal article" date="2004" name="Nat. Biotechnol.">
        <title>Complete genome sequence of the metabolically versatile photosynthetic bacterium Rhodopseudomonas palustris.</title>
        <authorList>
            <person name="Larimer F.W."/>
            <person name="Chain P."/>
            <person name="Hauser L."/>
            <person name="Lamerdin J.E."/>
            <person name="Malfatti S."/>
            <person name="Do L."/>
            <person name="Land M.L."/>
            <person name="Pelletier D.A."/>
            <person name="Beatty J.T."/>
            <person name="Lang A.S."/>
            <person name="Tabita F.R."/>
            <person name="Gibson J.L."/>
            <person name="Hanson T.E."/>
            <person name="Bobst C."/>
            <person name="Torres y Torres J.L."/>
            <person name="Peres C."/>
            <person name="Harrison F.H."/>
            <person name="Gibson J."/>
            <person name="Harwood C.S."/>
        </authorList>
    </citation>
    <scope>NUCLEOTIDE SEQUENCE [LARGE SCALE GENOMIC DNA]</scope>
    <source>
        <strain>ATCC BAA-98 / CGA009</strain>
    </source>
</reference>
<feature type="chain" id="PRO_0000270371" description="Methionine import ATP-binding protein MetN 1">
    <location>
        <begin position="1"/>
        <end position="373"/>
    </location>
</feature>
<feature type="domain" description="ABC transporter" evidence="1">
    <location>
        <begin position="29"/>
        <end position="270"/>
    </location>
</feature>
<feature type="binding site" evidence="1">
    <location>
        <begin position="67"/>
        <end position="74"/>
    </location>
    <ligand>
        <name>ATP</name>
        <dbReference type="ChEBI" id="CHEBI:30616"/>
    </ligand>
</feature>
<protein>
    <recommendedName>
        <fullName evidence="1">Methionine import ATP-binding protein MetN 1</fullName>
        <ecNumber evidence="1">7.4.2.11</ecNumber>
    </recommendedName>
</protein>
<organism>
    <name type="scientific">Rhodopseudomonas palustris (strain ATCC BAA-98 / CGA009)</name>
    <dbReference type="NCBI Taxonomy" id="258594"/>
    <lineage>
        <taxon>Bacteria</taxon>
        <taxon>Pseudomonadati</taxon>
        <taxon>Pseudomonadota</taxon>
        <taxon>Alphaproteobacteria</taxon>
        <taxon>Hyphomicrobiales</taxon>
        <taxon>Nitrobacteraceae</taxon>
        <taxon>Rhodopseudomonas</taxon>
    </lineage>
</organism>
<name>METN1_RHOPA</name>
<accession>Q6N9W0</accession>
<dbReference type="EC" id="7.4.2.11" evidence="1"/>
<dbReference type="EMBL" id="BX572597">
    <property type="protein sequence ID" value="CAE26869.1"/>
    <property type="molecule type" value="Genomic_DNA"/>
</dbReference>
<dbReference type="SMR" id="Q6N9W0"/>
<dbReference type="STRING" id="258594.RPA1426"/>
<dbReference type="eggNOG" id="COG1135">
    <property type="taxonomic scope" value="Bacteria"/>
</dbReference>
<dbReference type="HOGENOM" id="CLU_000604_1_3_5"/>
<dbReference type="PhylomeDB" id="Q6N9W0"/>
<dbReference type="GO" id="GO:0005886">
    <property type="term" value="C:plasma membrane"/>
    <property type="evidence" value="ECO:0007669"/>
    <property type="project" value="UniProtKB-SubCell"/>
</dbReference>
<dbReference type="GO" id="GO:0033232">
    <property type="term" value="F:ABC-type D-methionine transporter activity"/>
    <property type="evidence" value="ECO:0007669"/>
    <property type="project" value="UniProtKB-EC"/>
</dbReference>
<dbReference type="GO" id="GO:0005524">
    <property type="term" value="F:ATP binding"/>
    <property type="evidence" value="ECO:0007669"/>
    <property type="project" value="UniProtKB-KW"/>
</dbReference>
<dbReference type="GO" id="GO:0016887">
    <property type="term" value="F:ATP hydrolysis activity"/>
    <property type="evidence" value="ECO:0007669"/>
    <property type="project" value="InterPro"/>
</dbReference>
<dbReference type="CDD" id="cd03258">
    <property type="entry name" value="ABC_MetN_methionine_transporter"/>
    <property type="match status" value="1"/>
</dbReference>
<dbReference type="FunFam" id="3.40.50.300:FF:000056">
    <property type="entry name" value="Cell division ATP-binding protein FtsE"/>
    <property type="match status" value="1"/>
</dbReference>
<dbReference type="Gene3D" id="3.30.70.260">
    <property type="match status" value="1"/>
</dbReference>
<dbReference type="Gene3D" id="3.40.50.300">
    <property type="entry name" value="P-loop containing nucleotide triphosphate hydrolases"/>
    <property type="match status" value="1"/>
</dbReference>
<dbReference type="InterPro" id="IPR003593">
    <property type="entry name" value="AAA+_ATPase"/>
</dbReference>
<dbReference type="InterPro" id="IPR003439">
    <property type="entry name" value="ABC_transporter-like_ATP-bd"/>
</dbReference>
<dbReference type="InterPro" id="IPR017871">
    <property type="entry name" value="ABC_transporter-like_CS"/>
</dbReference>
<dbReference type="InterPro" id="IPR045865">
    <property type="entry name" value="ACT-like_dom_sf"/>
</dbReference>
<dbReference type="InterPro" id="IPR041701">
    <property type="entry name" value="MetN_ABC"/>
</dbReference>
<dbReference type="InterPro" id="IPR050086">
    <property type="entry name" value="MetN_ABC_transporter-like"/>
</dbReference>
<dbReference type="InterPro" id="IPR018449">
    <property type="entry name" value="NIL_domain"/>
</dbReference>
<dbReference type="InterPro" id="IPR027417">
    <property type="entry name" value="P-loop_NTPase"/>
</dbReference>
<dbReference type="PANTHER" id="PTHR43166">
    <property type="entry name" value="AMINO ACID IMPORT ATP-BINDING PROTEIN"/>
    <property type="match status" value="1"/>
</dbReference>
<dbReference type="PANTHER" id="PTHR43166:SF30">
    <property type="entry name" value="METHIONINE IMPORT ATP-BINDING PROTEIN METN"/>
    <property type="match status" value="1"/>
</dbReference>
<dbReference type="Pfam" id="PF00005">
    <property type="entry name" value="ABC_tran"/>
    <property type="match status" value="1"/>
</dbReference>
<dbReference type="Pfam" id="PF09383">
    <property type="entry name" value="NIL"/>
    <property type="match status" value="1"/>
</dbReference>
<dbReference type="SMART" id="SM00382">
    <property type="entry name" value="AAA"/>
    <property type="match status" value="1"/>
</dbReference>
<dbReference type="SMART" id="SM00930">
    <property type="entry name" value="NIL"/>
    <property type="match status" value="1"/>
</dbReference>
<dbReference type="SUPFAM" id="SSF55021">
    <property type="entry name" value="ACT-like"/>
    <property type="match status" value="1"/>
</dbReference>
<dbReference type="SUPFAM" id="SSF52540">
    <property type="entry name" value="P-loop containing nucleoside triphosphate hydrolases"/>
    <property type="match status" value="1"/>
</dbReference>
<dbReference type="PROSITE" id="PS00211">
    <property type="entry name" value="ABC_TRANSPORTER_1"/>
    <property type="match status" value="1"/>
</dbReference>
<dbReference type="PROSITE" id="PS50893">
    <property type="entry name" value="ABC_TRANSPORTER_2"/>
    <property type="match status" value="1"/>
</dbReference>
<dbReference type="PROSITE" id="PS51264">
    <property type="entry name" value="METN"/>
    <property type="match status" value="1"/>
</dbReference>